<comment type="function">
    <text evidence="1">Mitochondrial membrane ATP synthase (F(1)F(0) ATP synthase or Complex V) produces ATP from ADP in the presence of a proton gradient across the membrane which is generated by electron transport complexes of the respiratory chain. F-type ATPases consist of two structural domains, F(1) - containing the extramembraneous catalytic core, and F(0) - containing the membrane proton channel, linked together by a central stalk and a peripheral stalk. During catalysis, ATP synthesis in the catalytic domain of F(1) is coupled via a rotary mechanism of the central stalk subunits to proton translocation. Part of the complex F(1) domain and of the central stalk which is part of the complex rotary element. Rotation of the central stalk against the surrounding alpha(3)beta(3) subunits leads to hydrolysis of ATP in three separate catalytic sites on the beta subunits (By similarity).</text>
</comment>
<comment type="subunit">
    <text evidence="1">F-type ATPases have 2 components, CF(1) - the catalytic core - and CF(0) - the membrane proton channel. CF(1) has five subunits: alpha(3), beta(3), gamma(1), delta(1), epsilon(1). CF(0) seems to have nine subunits: a, b, c, d, e, f, g, F6 and 8 (or A6L) (By similarity).</text>
</comment>
<comment type="subcellular location">
    <subcellularLocation>
        <location evidence="1">Mitochondrion inner membrane</location>
    </subcellularLocation>
</comment>
<comment type="similarity">
    <text evidence="2">Belongs to the eukaryotic ATPase epsilon family.</text>
</comment>
<comment type="caution">
    <text evidence="3">Defined as a pseudogene by HGNC. However, proteomic data on a specific peptide suggest the existence of this protein.</text>
</comment>
<gene>
    <name evidence="4" type="primary">ATP5F1EP2</name>
    <name evidence="4" type="synonym">ATP5EP2</name>
</gene>
<feature type="chain" id="PRO_0000347182" description="ATP synthase subunit epsilon-like protein, mitochondrial">
    <location>
        <begin position="1"/>
        <end position="51"/>
    </location>
</feature>
<feature type="modified residue" description="N6-acetyllysine" evidence="1">
    <location>
        <position position="21"/>
    </location>
</feature>
<name>AT5EL_HUMAN</name>
<keyword id="KW-0007">Acetylation</keyword>
<keyword id="KW-0066">ATP synthesis</keyword>
<keyword id="KW-0139">CF(1)</keyword>
<keyword id="KW-0375">Hydrogen ion transport</keyword>
<keyword id="KW-0378">Hydrolase</keyword>
<keyword id="KW-0406">Ion transport</keyword>
<keyword id="KW-0472">Membrane</keyword>
<keyword id="KW-0496">Mitochondrion</keyword>
<keyword id="KW-0999">Mitochondrion inner membrane</keyword>
<keyword id="KW-1185">Reference proteome</keyword>
<keyword id="KW-0813">Transport</keyword>
<reference key="1">
    <citation type="journal article" date="2004" name="Nature">
        <title>The DNA sequence and analysis of human chromosome 13.</title>
        <authorList>
            <person name="Dunham A."/>
            <person name="Matthews L.H."/>
            <person name="Burton J."/>
            <person name="Ashurst J.L."/>
            <person name="Howe K.L."/>
            <person name="Ashcroft K.J."/>
            <person name="Beare D.M."/>
            <person name="Burford D.C."/>
            <person name="Hunt S.E."/>
            <person name="Griffiths-Jones S."/>
            <person name="Jones M.C."/>
            <person name="Keenan S.J."/>
            <person name="Oliver K."/>
            <person name="Scott C.E."/>
            <person name="Ainscough R."/>
            <person name="Almeida J.P."/>
            <person name="Ambrose K.D."/>
            <person name="Andrews D.T."/>
            <person name="Ashwell R.I.S."/>
            <person name="Babbage A.K."/>
            <person name="Bagguley C.L."/>
            <person name="Bailey J."/>
            <person name="Bannerjee R."/>
            <person name="Barlow K.F."/>
            <person name="Bates K."/>
            <person name="Beasley H."/>
            <person name="Bird C.P."/>
            <person name="Bray-Allen S."/>
            <person name="Brown A.J."/>
            <person name="Brown J.Y."/>
            <person name="Burrill W."/>
            <person name="Carder C."/>
            <person name="Carter N.P."/>
            <person name="Chapman J.C."/>
            <person name="Clamp M.E."/>
            <person name="Clark S.Y."/>
            <person name="Clarke G."/>
            <person name="Clee C.M."/>
            <person name="Clegg S.C."/>
            <person name="Cobley V."/>
            <person name="Collins J.E."/>
            <person name="Corby N."/>
            <person name="Coville G.J."/>
            <person name="Deloukas P."/>
            <person name="Dhami P."/>
            <person name="Dunham I."/>
            <person name="Dunn M."/>
            <person name="Earthrowl M.E."/>
            <person name="Ellington A.G."/>
            <person name="Faulkner L."/>
            <person name="Frankish A.G."/>
            <person name="Frankland J."/>
            <person name="French L."/>
            <person name="Garner P."/>
            <person name="Garnett J."/>
            <person name="Gilbert J.G.R."/>
            <person name="Gilson C.J."/>
            <person name="Ghori J."/>
            <person name="Grafham D.V."/>
            <person name="Gribble S.M."/>
            <person name="Griffiths C."/>
            <person name="Hall R.E."/>
            <person name="Hammond S."/>
            <person name="Harley J.L."/>
            <person name="Hart E.A."/>
            <person name="Heath P.D."/>
            <person name="Howden P.J."/>
            <person name="Huckle E.J."/>
            <person name="Hunt P.J."/>
            <person name="Hunt A.R."/>
            <person name="Johnson C."/>
            <person name="Johnson D."/>
            <person name="Kay M."/>
            <person name="Kimberley A.M."/>
            <person name="King A."/>
            <person name="Laird G.K."/>
            <person name="Langford C.J."/>
            <person name="Lawlor S."/>
            <person name="Leongamornlert D.A."/>
            <person name="Lloyd D.M."/>
            <person name="Lloyd C."/>
            <person name="Loveland J.E."/>
            <person name="Lovell J."/>
            <person name="Martin S."/>
            <person name="Mashreghi-Mohammadi M."/>
            <person name="McLaren S.J."/>
            <person name="McMurray A."/>
            <person name="Milne S."/>
            <person name="Moore M.J.F."/>
            <person name="Nickerson T."/>
            <person name="Palmer S.A."/>
            <person name="Pearce A.V."/>
            <person name="Peck A.I."/>
            <person name="Pelan S."/>
            <person name="Phillimore B."/>
            <person name="Porter K.M."/>
            <person name="Rice C.M."/>
            <person name="Searle S."/>
            <person name="Sehra H.K."/>
            <person name="Shownkeen R."/>
            <person name="Skuce C.D."/>
            <person name="Smith M."/>
            <person name="Steward C.A."/>
            <person name="Sycamore N."/>
            <person name="Tester J."/>
            <person name="Thomas D.W."/>
            <person name="Tracey A."/>
            <person name="Tromans A."/>
            <person name="Tubby B."/>
            <person name="Wall M."/>
            <person name="Wallis J.M."/>
            <person name="West A.P."/>
            <person name="Whitehead S.L."/>
            <person name="Willey D.L."/>
            <person name="Wilming L."/>
            <person name="Wray P.W."/>
            <person name="Wright M.W."/>
            <person name="Young L."/>
            <person name="Coulson A."/>
            <person name="Durbin R.M."/>
            <person name="Hubbard T."/>
            <person name="Sulston J.E."/>
            <person name="Beck S."/>
            <person name="Bentley D.R."/>
            <person name="Rogers J."/>
            <person name="Ross M.T."/>
        </authorList>
    </citation>
    <scope>NUCLEOTIDE SEQUENCE [LARGE SCALE GENOMIC DNA]</scope>
</reference>
<reference key="2">
    <citation type="journal article" date="2007" name="J. Proteome Res.">
        <title>Improved titanium dioxide enrichment of phosphopeptides from HeLa cells and high confident phosphopeptide identification by cross-validation of MS/MS and MS/MS/MS spectra.</title>
        <authorList>
            <person name="Yu L.R."/>
            <person name="Zhu Z."/>
            <person name="Chan K.C."/>
            <person name="Issaq H.J."/>
            <person name="Dimitrov D.S."/>
            <person name="Veenstra T.D."/>
        </authorList>
    </citation>
    <scope>IDENTIFICATION BY MASS SPECTROMETRY</scope>
    <scope>CAUTION</scope>
    <source>
        <tissue>Cervix carcinoma</tissue>
    </source>
</reference>
<dbReference type="EMBL" id="AL591024">
    <property type="status" value="NOT_ANNOTATED_CDS"/>
    <property type="molecule type" value="Genomic_DNA"/>
</dbReference>
<dbReference type="SMR" id="Q5VTU8"/>
<dbReference type="ComplexPortal" id="CPX-6151">
    <property type="entry name" value="Mitochondrial proton-transporting ATP synthase complex"/>
</dbReference>
<dbReference type="FunCoup" id="Q5VTU8">
    <property type="interactions" value="558"/>
</dbReference>
<dbReference type="IntAct" id="Q5VTU8">
    <property type="interactions" value="19"/>
</dbReference>
<dbReference type="SwissPalm" id="Q5VTU8"/>
<dbReference type="BioMuta" id="ATP5EP2"/>
<dbReference type="DMDM" id="74746994"/>
<dbReference type="jPOST" id="Q5VTU8"/>
<dbReference type="MassIVE" id="Q5VTU8"/>
<dbReference type="PaxDb" id="9606-ENSP00000370414"/>
<dbReference type="PeptideAtlas" id="Q5VTU8"/>
<dbReference type="ProteomicsDB" id="65358"/>
<dbReference type="Pumba" id="Q5VTU8"/>
<dbReference type="TopDownProteomics" id="Q5VTU8"/>
<dbReference type="UCSC" id="uc001uru.4">
    <property type="organism name" value="human"/>
</dbReference>
<dbReference type="AGR" id="HGNC:34026"/>
<dbReference type="GeneCards" id="ATP5F1EP2"/>
<dbReference type="HGNC" id="HGNC:34026">
    <property type="gene designation" value="ATP5F1EP2"/>
</dbReference>
<dbReference type="neXtProt" id="NX_Q5VTU8"/>
<dbReference type="eggNOG" id="KOG3495">
    <property type="taxonomic scope" value="Eukaryota"/>
</dbReference>
<dbReference type="HOGENOM" id="CLU_187039_4_0_1"/>
<dbReference type="InParanoid" id="Q5VTU8"/>
<dbReference type="PAN-GO" id="Q5VTU8">
    <property type="GO annotations" value="3 GO annotations based on evolutionary models"/>
</dbReference>
<dbReference type="PhylomeDB" id="Q5VTU8"/>
<dbReference type="TreeFam" id="TF300278"/>
<dbReference type="PathwayCommons" id="Q5VTU8"/>
<dbReference type="SignaLink" id="Q5VTU8"/>
<dbReference type="ChiTaRS" id="ATP5EP2">
    <property type="organism name" value="human"/>
</dbReference>
<dbReference type="Pharos" id="Q5VTU8">
    <property type="development level" value="Tdark"/>
</dbReference>
<dbReference type="PRO" id="PR:Q5VTU8"/>
<dbReference type="Proteomes" id="UP000005640">
    <property type="component" value="Unplaced"/>
</dbReference>
<dbReference type="RNAct" id="Q5VTU8">
    <property type="molecule type" value="protein"/>
</dbReference>
<dbReference type="GO" id="GO:0005743">
    <property type="term" value="C:mitochondrial inner membrane"/>
    <property type="evidence" value="ECO:0000318"/>
    <property type="project" value="GO_Central"/>
</dbReference>
<dbReference type="GO" id="GO:0005739">
    <property type="term" value="C:mitochondrion"/>
    <property type="evidence" value="ECO:0007005"/>
    <property type="project" value="UniProtKB"/>
</dbReference>
<dbReference type="GO" id="GO:0045259">
    <property type="term" value="C:proton-transporting ATP synthase complex"/>
    <property type="evidence" value="ECO:0000303"/>
    <property type="project" value="ComplexPortal"/>
</dbReference>
<dbReference type="GO" id="GO:0016787">
    <property type="term" value="F:hydrolase activity"/>
    <property type="evidence" value="ECO:0007669"/>
    <property type="project" value="UniProtKB-KW"/>
</dbReference>
<dbReference type="GO" id="GO:0046933">
    <property type="term" value="F:proton-transporting ATP synthase activity, rotational mechanism"/>
    <property type="evidence" value="ECO:0007669"/>
    <property type="project" value="InterPro"/>
</dbReference>
<dbReference type="GO" id="GO:0015986">
    <property type="term" value="P:proton motive force-driven ATP synthesis"/>
    <property type="evidence" value="ECO:0000303"/>
    <property type="project" value="ComplexPortal"/>
</dbReference>
<dbReference type="GO" id="GO:0042776">
    <property type="term" value="P:proton motive force-driven mitochondrial ATP synthesis"/>
    <property type="evidence" value="ECO:0000318"/>
    <property type="project" value="GO_Central"/>
</dbReference>
<dbReference type="CDD" id="cd12153">
    <property type="entry name" value="F1-ATPase_epsilon"/>
    <property type="match status" value="1"/>
</dbReference>
<dbReference type="FunFam" id="1.10.1620.20:FF:000001">
    <property type="entry name" value="ATP synthase subunit epsilon, mitochondrial"/>
    <property type="match status" value="1"/>
</dbReference>
<dbReference type="Gene3D" id="1.10.1620.20">
    <property type="entry name" value="ATP synthase, F1 complex, epsilon subunit superfamily, mitochondrial"/>
    <property type="match status" value="1"/>
</dbReference>
<dbReference type="InterPro" id="IPR006721">
    <property type="entry name" value="ATP_synth_F1_esu_mt"/>
</dbReference>
<dbReference type="InterPro" id="IPR036742">
    <property type="entry name" value="ATP_synth_F1_esu_sf_mt"/>
</dbReference>
<dbReference type="PANTHER" id="PTHR12448">
    <property type="entry name" value="ATP SYNTHASE EPSILON CHAIN, MITOCHONDRIAL"/>
    <property type="match status" value="1"/>
</dbReference>
<dbReference type="PANTHER" id="PTHR12448:SF2">
    <property type="entry name" value="ATP SYNTHASE SUBUNIT EPSILON-LIKE PROTEIN, MITOCHONDRIAL"/>
    <property type="match status" value="1"/>
</dbReference>
<dbReference type="Pfam" id="PF04627">
    <property type="entry name" value="ATP-synt_Eps"/>
    <property type="match status" value="1"/>
</dbReference>
<dbReference type="SUPFAM" id="SSF48690">
    <property type="entry name" value="Epsilon subunit of mitochondrial F1F0-ATP synthase"/>
    <property type="match status" value="1"/>
</dbReference>
<accession>Q5VTU8</accession>
<protein>
    <recommendedName>
        <fullName evidence="2">ATP synthase subunit epsilon-like protein, mitochondrial</fullName>
    </recommendedName>
    <alternativeName>
        <fullName evidence="4">ATP synthase F1 subunit epsilon pseudogene 2</fullName>
    </alternativeName>
</protein>
<organism>
    <name type="scientific">Homo sapiens</name>
    <name type="common">Human</name>
    <dbReference type="NCBI Taxonomy" id="9606"/>
    <lineage>
        <taxon>Eukaryota</taxon>
        <taxon>Metazoa</taxon>
        <taxon>Chordata</taxon>
        <taxon>Craniata</taxon>
        <taxon>Vertebrata</taxon>
        <taxon>Euteleostomi</taxon>
        <taxon>Mammalia</taxon>
        <taxon>Eutheria</taxon>
        <taxon>Euarchontoglires</taxon>
        <taxon>Primates</taxon>
        <taxon>Haplorrhini</taxon>
        <taxon>Catarrhini</taxon>
        <taxon>Hominidae</taxon>
        <taxon>Homo</taxon>
    </lineage>
</organism>
<proteinExistence type="evidence at protein level"/>
<sequence length="51" mass="5807">MVAYWRQAGLSYIRYSQICAKVVRDALKTEFKANAKKTSGNSVKIVKVKKE</sequence>
<evidence type="ECO:0000250" key="1">
    <source>
        <dbReference type="UniProtKB" id="P56381"/>
    </source>
</evidence>
<evidence type="ECO:0000305" key="2"/>
<evidence type="ECO:0000305" key="3">
    <source>
    </source>
</evidence>
<evidence type="ECO:0000312" key="4">
    <source>
        <dbReference type="HGNC" id="HGNC:34026"/>
    </source>
</evidence>